<gene>
    <name type="primary">MED7</name>
    <name type="ORF">SNOG_12467</name>
</gene>
<keyword id="KW-0010">Activator</keyword>
<keyword id="KW-0539">Nucleus</keyword>
<keyword id="KW-0804">Transcription</keyword>
<keyword id="KW-0805">Transcription regulation</keyword>
<dbReference type="EMBL" id="CH445346">
    <property type="protein sequence ID" value="EAT80280.1"/>
    <property type="molecule type" value="Genomic_DNA"/>
</dbReference>
<dbReference type="RefSeq" id="XP_001802689.1">
    <property type="nucleotide sequence ID" value="XM_001802637.1"/>
</dbReference>
<dbReference type="SMR" id="Q0U6Z7"/>
<dbReference type="FunCoup" id="Q0U6Z7">
    <property type="interactions" value="673"/>
</dbReference>
<dbReference type="STRING" id="321614.Q0U6Z7"/>
<dbReference type="EnsemblFungi" id="SNOT_12467">
    <property type="protein sequence ID" value="SNOT_12467"/>
    <property type="gene ID" value="SNOG_12467"/>
</dbReference>
<dbReference type="GeneID" id="5979598"/>
<dbReference type="KEGG" id="pno:SNOG_12467"/>
<dbReference type="VEuPathDB" id="FungiDB:JI435_124670"/>
<dbReference type="eggNOG" id="KOG0570">
    <property type="taxonomic scope" value="Eukaryota"/>
</dbReference>
<dbReference type="HOGENOM" id="CLU_065214_0_1_1"/>
<dbReference type="InParanoid" id="Q0U6Z7"/>
<dbReference type="OMA" id="IHDSYSM"/>
<dbReference type="OrthoDB" id="10253553at2759"/>
<dbReference type="Proteomes" id="UP000001055">
    <property type="component" value="Unassembled WGS sequence"/>
</dbReference>
<dbReference type="GO" id="GO:0070847">
    <property type="term" value="C:core mediator complex"/>
    <property type="evidence" value="ECO:0000318"/>
    <property type="project" value="GO_Central"/>
</dbReference>
<dbReference type="GO" id="GO:0016592">
    <property type="term" value="C:mediator complex"/>
    <property type="evidence" value="ECO:0000318"/>
    <property type="project" value="GO_Central"/>
</dbReference>
<dbReference type="GO" id="GO:0003712">
    <property type="term" value="F:transcription coregulator activity"/>
    <property type="evidence" value="ECO:0007669"/>
    <property type="project" value="InterPro"/>
</dbReference>
<dbReference type="GO" id="GO:0006357">
    <property type="term" value="P:regulation of transcription by RNA polymerase II"/>
    <property type="evidence" value="ECO:0000318"/>
    <property type="project" value="GO_Central"/>
</dbReference>
<dbReference type="Gene3D" id="6.10.140.1520">
    <property type="match status" value="1"/>
</dbReference>
<dbReference type="Gene3D" id="6.10.140.200">
    <property type="match status" value="1"/>
</dbReference>
<dbReference type="InterPro" id="IPR037212">
    <property type="entry name" value="Med7/Med21-like"/>
</dbReference>
<dbReference type="InterPro" id="IPR009244">
    <property type="entry name" value="Mediatior_Med7"/>
</dbReference>
<dbReference type="InterPro" id="IPR044888">
    <property type="entry name" value="Mediatior_Med7_sf"/>
</dbReference>
<dbReference type="PANTHER" id="PTHR21428">
    <property type="entry name" value="MEDIATOR OF RNA POLYMERASE II TRANSCRIPTION SUBUNIT 7"/>
    <property type="match status" value="1"/>
</dbReference>
<dbReference type="PANTHER" id="PTHR21428:SF11">
    <property type="entry name" value="MEDIATOR OF RNA POLYMERASE II TRANSCRIPTION SUBUNIT 7"/>
    <property type="match status" value="1"/>
</dbReference>
<dbReference type="Pfam" id="PF05983">
    <property type="entry name" value="Med7"/>
    <property type="match status" value="1"/>
</dbReference>
<dbReference type="SUPFAM" id="SSF140718">
    <property type="entry name" value="Mediator hinge subcomplex-like"/>
    <property type="match status" value="1"/>
</dbReference>
<evidence type="ECO:0000250" key="1"/>
<evidence type="ECO:0000256" key="2">
    <source>
        <dbReference type="SAM" id="MobiDB-lite"/>
    </source>
</evidence>
<evidence type="ECO:0000305" key="3"/>
<reference key="1">
    <citation type="journal article" date="2007" name="Plant Cell">
        <title>Dothideomycete-plant interactions illuminated by genome sequencing and EST analysis of the wheat pathogen Stagonospora nodorum.</title>
        <authorList>
            <person name="Hane J.K."/>
            <person name="Lowe R.G.T."/>
            <person name="Solomon P.S."/>
            <person name="Tan K.-C."/>
            <person name="Schoch C.L."/>
            <person name="Spatafora J.W."/>
            <person name="Crous P.W."/>
            <person name="Kodira C.D."/>
            <person name="Birren B.W."/>
            <person name="Galagan J.E."/>
            <person name="Torriani S.F.F."/>
            <person name="McDonald B.A."/>
            <person name="Oliver R.P."/>
        </authorList>
    </citation>
    <scope>NUCLEOTIDE SEQUENCE [LARGE SCALE GENOMIC DNA]</scope>
    <source>
        <strain>SN15 / ATCC MYA-4574 / FGSC 10173</strain>
    </source>
</reference>
<feature type="chain" id="PRO_0000303206" description="Mediator of RNA polymerase II transcription subunit 7">
    <location>
        <begin position="1"/>
        <end position="276"/>
    </location>
</feature>
<feature type="region of interest" description="Disordered" evidence="2">
    <location>
        <begin position="1"/>
        <end position="27"/>
    </location>
</feature>
<feature type="region of interest" description="Disordered" evidence="2">
    <location>
        <begin position="234"/>
        <end position="276"/>
    </location>
</feature>
<feature type="compositionally biased region" description="Basic and acidic residues" evidence="2">
    <location>
        <begin position="1"/>
        <end position="11"/>
    </location>
</feature>
<feature type="compositionally biased region" description="Basic and acidic residues" evidence="2">
    <location>
        <begin position="234"/>
        <end position="263"/>
    </location>
</feature>
<organism>
    <name type="scientific">Phaeosphaeria nodorum (strain SN15 / ATCC MYA-4574 / FGSC 10173)</name>
    <name type="common">Glume blotch fungus</name>
    <name type="synonym">Parastagonospora nodorum</name>
    <dbReference type="NCBI Taxonomy" id="321614"/>
    <lineage>
        <taxon>Eukaryota</taxon>
        <taxon>Fungi</taxon>
        <taxon>Dikarya</taxon>
        <taxon>Ascomycota</taxon>
        <taxon>Pezizomycotina</taxon>
        <taxon>Dothideomycetes</taxon>
        <taxon>Pleosporomycetidae</taxon>
        <taxon>Pleosporales</taxon>
        <taxon>Pleosporineae</taxon>
        <taxon>Phaeosphaeriaceae</taxon>
        <taxon>Parastagonospora</taxon>
    </lineage>
</organism>
<sequence length="276" mass="31789">MADADAQRQAEEDANLQLPPYPHPPPFYLKFTTENKDRLDEIKKEDGIDTASDGGKSAQLSTEQILALPTELRYLIPPEPPADTEEFNVFGTINQLKDRDTFNGTMEYISQALAKLLPDWKYEQLYPTTDASNSASSTLDRQRYLFRFLRSILVAYIELLGIVAINPTDELKDDKLKDILTMVTNMHALINEYRPHQARETLISEMERQVEKKKMEIQGVRKMKERVGEVLEGFGREIPSEKAEDRTEEAAVTSEEERKRDAQRQMWQAMDEMLSQ</sequence>
<name>MED7_PHANO</name>
<proteinExistence type="inferred from homology"/>
<comment type="function">
    <text evidence="1">Component of the Mediator complex, a coactivator involved in the regulated transcription of nearly all RNA polymerase II-dependent genes. Mediator functions as a bridge to convey information from gene-specific regulatory proteins to the basal RNA polymerase II transcription machinery. Mediator is recruited to promoters by direct interactions with regulatory proteins and serves as a scaffold for the assembly of a functional preinitiation complex with RNA polymerase II and the general transcription factors (By similarity).</text>
</comment>
<comment type="subunit">
    <text evidence="1">Component of the Mediator complex.</text>
</comment>
<comment type="subcellular location">
    <subcellularLocation>
        <location evidence="1">Nucleus</location>
    </subcellularLocation>
</comment>
<comment type="similarity">
    <text evidence="3">Belongs to the Mediator complex subunit 7 family.</text>
</comment>
<accession>Q0U6Z7</accession>
<protein>
    <recommendedName>
        <fullName>Mediator of RNA polymerase II transcription subunit 7</fullName>
    </recommendedName>
    <alternativeName>
        <fullName>Mediator complex subunit 7</fullName>
    </alternativeName>
</protein>